<evidence type="ECO:0000250" key="1"/>
<evidence type="ECO:0000250" key="2">
    <source>
        <dbReference type="UniProtKB" id="P19643"/>
    </source>
</evidence>
<evidence type="ECO:0000250" key="3">
    <source>
        <dbReference type="UniProtKB" id="P27338"/>
    </source>
</evidence>
<evidence type="ECO:0000250" key="4">
    <source>
        <dbReference type="UniProtKB" id="Q8BW75"/>
    </source>
</evidence>
<evidence type="ECO:0000305" key="5"/>
<reference key="1">
    <citation type="journal article" date="2003" name="Inflammopharmacology">
        <title>Nucleotide sequences of putative cDNAs for guinea-pig monoamine oxidase.</title>
        <authorList>
            <person name="Yaekashiwa N."/>
            <person name="Tamate H.B."/>
            <person name="Takeuchi T."/>
            <person name="Sugimoto H."/>
            <person name="Shibata K."/>
            <person name="Kinemuchi H."/>
        </authorList>
    </citation>
    <scope>NUCLEOTIDE SEQUENCE [MRNA]</scope>
    <source>
        <tissue>Brain</tissue>
        <tissue>Liver</tissue>
    </source>
</reference>
<comment type="function">
    <text evidence="3">Catalyzes the oxidative deamination of primary and some secondary amines such as neurotransmitters, and exogenous amines including the tertiary amine, neurotoxin 1-methyl-4-phenyl-1,2,3,6-tetrahydropyridine (MPTP), with concomitant reduction of oxygen to hydrogen peroxide and participates in the metabolism of neuroactive and vasoactive amines in the central nervous system and peripheral tissues. Preferentially degrades benzylamine and phenylethylamine.</text>
</comment>
<comment type="catalytic activity">
    <reaction evidence="3">
        <text>a secondary aliphatic amine + O2 + H2O = a primary amine + an aldehyde + H2O2</text>
        <dbReference type="Rhea" id="RHEA:26414"/>
        <dbReference type="ChEBI" id="CHEBI:15377"/>
        <dbReference type="ChEBI" id="CHEBI:15379"/>
        <dbReference type="ChEBI" id="CHEBI:16240"/>
        <dbReference type="ChEBI" id="CHEBI:17478"/>
        <dbReference type="ChEBI" id="CHEBI:58855"/>
        <dbReference type="ChEBI" id="CHEBI:65296"/>
        <dbReference type="EC" id="1.4.3.4"/>
    </reaction>
</comment>
<comment type="catalytic activity">
    <reaction evidence="3">
        <text>(R)-adrenaline + O2 + H2O = (R)-3,4-dihydroxymandelaldehyde + methylamine + H2O2</text>
        <dbReference type="Rhea" id="RHEA:51168"/>
        <dbReference type="ChEBI" id="CHEBI:15377"/>
        <dbReference type="ChEBI" id="CHEBI:15379"/>
        <dbReference type="ChEBI" id="CHEBI:16240"/>
        <dbReference type="ChEBI" id="CHEBI:59338"/>
        <dbReference type="ChEBI" id="CHEBI:71406"/>
        <dbReference type="ChEBI" id="CHEBI:180943"/>
    </reaction>
</comment>
<comment type="catalytic activity">
    <reaction evidence="3">
        <text>a primary methyl amine + O2 + H2O = an aldehyde + H2O2 + NH4(+)</text>
        <dbReference type="Rhea" id="RHEA:16153"/>
        <dbReference type="ChEBI" id="CHEBI:15377"/>
        <dbReference type="ChEBI" id="CHEBI:15379"/>
        <dbReference type="ChEBI" id="CHEBI:16240"/>
        <dbReference type="ChEBI" id="CHEBI:17478"/>
        <dbReference type="ChEBI" id="CHEBI:28938"/>
        <dbReference type="ChEBI" id="CHEBI:228804"/>
        <dbReference type="EC" id="1.4.3.21"/>
    </reaction>
</comment>
<comment type="catalytic activity">
    <reaction evidence="3">
        <text>benzylamine + O2 + H2O = benzaldehyde + H2O2 + NH4(+)</text>
        <dbReference type="Rhea" id="RHEA:59424"/>
        <dbReference type="ChEBI" id="CHEBI:15377"/>
        <dbReference type="ChEBI" id="CHEBI:15379"/>
        <dbReference type="ChEBI" id="CHEBI:16240"/>
        <dbReference type="ChEBI" id="CHEBI:17169"/>
        <dbReference type="ChEBI" id="CHEBI:28938"/>
        <dbReference type="ChEBI" id="CHEBI:225238"/>
    </reaction>
    <physiologicalReaction direction="left-to-right" evidence="3">
        <dbReference type="Rhea" id="RHEA:59425"/>
    </physiologicalReaction>
</comment>
<comment type="catalytic activity">
    <reaction evidence="3">
        <text>dopamine + O2 + H2O = 3,4-dihydroxyphenylacetaldehyde + H2O2 + NH4(+)</text>
        <dbReference type="Rhea" id="RHEA:27946"/>
        <dbReference type="ChEBI" id="CHEBI:15377"/>
        <dbReference type="ChEBI" id="CHEBI:15379"/>
        <dbReference type="ChEBI" id="CHEBI:16240"/>
        <dbReference type="ChEBI" id="CHEBI:27978"/>
        <dbReference type="ChEBI" id="CHEBI:28938"/>
        <dbReference type="ChEBI" id="CHEBI:59905"/>
    </reaction>
</comment>
<comment type="catalytic activity">
    <reaction evidence="3">
        <text>tyramine + O2 + H2O = (4-hydroxyphenyl)acetaldehyde + H2O2 + NH4(+)</text>
        <dbReference type="Rhea" id="RHEA:30591"/>
        <dbReference type="ChEBI" id="CHEBI:15377"/>
        <dbReference type="ChEBI" id="CHEBI:15379"/>
        <dbReference type="ChEBI" id="CHEBI:15621"/>
        <dbReference type="ChEBI" id="CHEBI:16240"/>
        <dbReference type="ChEBI" id="CHEBI:28938"/>
        <dbReference type="ChEBI" id="CHEBI:327995"/>
    </reaction>
</comment>
<comment type="catalytic activity">
    <reaction evidence="3">
        <text>(R)-noradrenaline + O2 + H2O = (R)-3,4-dihydroxymandelaldehyde + H2O2 + NH4(+)</text>
        <dbReference type="Rhea" id="RHEA:69076"/>
        <dbReference type="ChEBI" id="CHEBI:15377"/>
        <dbReference type="ChEBI" id="CHEBI:15379"/>
        <dbReference type="ChEBI" id="CHEBI:16240"/>
        <dbReference type="ChEBI" id="CHEBI:28938"/>
        <dbReference type="ChEBI" id="CHEBI:72587"/>
        <dbReference type="ChEBI" id="CHEBI:180943"/>
    </reaction>
</comment>
<comment type="catalytic activity">
    <reaction evidence="3">
        <text>2-phenylethylamine + O2 + H2O = 2-phenylacetaldehyde + H2O2 + NH4(+)</text>
        <dbReference type="Rhea" id="RHEA:25265"/>
        <dbReference type="ChEBI" id="CHEBI:15377"/>
        <dbReference type="ChEBI" id="CHEBI:15379"/>
        <dbReference type="ChEBI" id="CHEBI:16240"/>
        <dbReference type="ChEBI" id="CHEBI:16424"/>
        <dbReference type="ChEBI" id="CHEBI:28938"/>
        <dbReference type="ChEBI" id="CHEBI:225237"/>
    </reaction>
</comment>
<comment type="catalytic activity">
    <reaction evidence="2">
        <text>N-acetylputrescine + O2 + H2O = 4-acetamidobutanal + H2O2 + NH4(+)</text>
        <dbReference type="Rhea" id="RHEA:70283"/>
        <dbReference type="ChEBI" id="CHEBI:7386"/>
        <dbReference type="ChEBI" id="CHEBI:15377"/>
        <dbReference type="ChEBI" id="CHEBI:15379"/>
        <dbReference type="ChEBI" id="CHEBI:16240"/>
        <dbReference type="ChEBI" id="CHEBI:28938"/>
        <dbReference type="ChEBI" id="CHEBI:58263"/>
    </reaction>
    <physiologicalReaction direction="left-to-right" evidence="2">
        <dbReference type="Rhea" id="RHEA:70284"/>
    </physiologicalReaction>
</comment>
<comment type="cofactor">
    <cofactor evidence="3">
        <name>FAD</name>
        <dbReference type="ChEBI" id="CHEBI:57692"/>
    </cofactor>
</comment>
<comment type="subunit">
    <text evidence="1">Monomer, homo- or heterodimer (containing two subunits of similar size). Each subunit contains a covalently bound flavin. Enzymatically active as monomer (By similarity).</text>
</comment>
<comment type="subcellular location">
    <subcellularLocation>
        <location>Mitochondrion outer membrane</location>
        <topology>Single-pass type IV membrane protein</topology>
        <orientation>Cytoplasmic side</orientation>
    </subcellularLocation>
</comment>
<comment type="similarity">
    <text evidence="5">Belongs to the flavin monoamine oxidase family.</text>
</comment>
<dbReference type="EC" id="1.4.3.21" evidence="3"/>
<dbReference type="EC" id="1.4.3.4" evidence="3"/>
<dbReference type="EMBL" id="AB047271">
    <property type="protein sequence ID" value="BAB40418.1"/>
    <property type="molecule type" value="mRNA"/>
</dbReference>
<dbReference type="RefSeq" id="NP_001166452.1">
    <property type="nucleotide sequence ID" value="NM_001172981.1"/>
</dbReference>
<dbReference type="SMR" id="P58028"/>
<dbReference type="FunCoup" id="P58028">
    <property type="interactions" value="554"/>
</dbReference>
<dbReference type="STRING" id="10141.ENSCPOP00000000879"/>
<dbReference type="GeneID" id="100135573"/>
<dbReference type="KEGG" id="cpoc:100135573"/>
<dbReference type="CTD" id="4129"/>
<dbReference type="eggNOG" id="KOG0029">
    <property type="taxonomic scope" value="Eukaryota"/>
</dbReference>
<dbReference type="InParanoid" id="P58028"/>
<dbReference type="OrthoDB" id="7777654at2759"/>
<dbReference type="Proteomes" id="UP000005447">
    <property type="component" value="Unassembled WGS sequence"/>
</dbReference>
<dbReference type="GO" id="GO:0005741">
    <property type="term" value="C:mitochondrial outer membrane"/>
    <property type="evidence" value="ECO:0007669"/>
    <property type="project" value="UniProtKB-SubCell"/>
</dbReference>
<dbReference type="GO" id="GO:0005739">
    <property type="term" value="C:mitochondrion"/>
    <property type="evidence" value="ECO:0000314"/>
    <property type="project" value="UniProtKB"/>
</dbReference>
<dbReference type="GO" id="GO:0050660">
    <property type="term" value="F:flavin adenine dinucleotide binding"/>
    <property type="evidence" value="ECO:0007669"/>
    <property type="project" value="TreeGrafter"/>
</dbReference>
<dbReference type="GO" id="GO:0097621">
    <property type="term" value="F:monoamine oxidase activity"/>
    <property type="evidence" value="ECO:0000250"/>
    <property type="project" value="UniProtKB"/>
</dbReference>
<dbReference type="GO" id="GO:0008131">
    <property type="term" value="F:primary methylamine oxidase activity"/>
    <property type="evidence" value="ECO:0000314"/>
    <property type="project" value="UniProtKB"/>
</dbReference>
<dbReference type="Gene3D" id="3.90.660.10">
    <property type="match status" value="2"/>
</dbReference>
<dbReference type="Gene3D" id="6.10.250.130">
    <property type="match status" value="1"/>
</dbReference>
<dbReference type="Gene3D" id="3.50.50.60">
    <property type="entry name" value="FAD/NAD(P)-binding domain"/>
    <property type="match status" value="2"/>
</dbReference>
<dbReference type="InterPro" id="IPR002937">
    <property type="entry name" value="Amino_oxidase"/>
</dbReference>
<dbReference type="InterPro" id="IPR036188">
    <property type="entry name" value="FAD/NAD-bd_sf"/>
</dbReference>
<dbReference type="InterPro" id="IPR001613">
    <property type="entry name" value="Flavin_amine_oxidase"/>
</dbReference>
<dbReference type="InterPro" id="IPR050703">
    <property type="entry name" value="Flavin_MAO"/>
</dbReference>
<dbReference type="PANTHER" id="PTHR43563">
    <property type="entry name" value="AMINE OXIDASE"/>
    <property type="match status" value="1"/>
</dbReference>
<dbReference type="PANTHER" id="PTHR43563:SF1">
    <property type="entry name" value="AMINE OXIDASE [FLAVIN-CONTAINING] B"/>
    <property type="match status" value="1"/>
</dbReference>
<dbReference type="Pfam" id="PF01593">
    <property type="entry name" value="Amino_oxidase"/>
    <property type="match status" value="1"/>
</dbReference>
<dbReference type="PRINTS" id="PR00757">
    <property type="entry name" value="AMINEOXDASEF"/>
</dbReference>
<dbReference type="SUPFAM" id="SSF54373">
    <property type="entry name" value="FAD-linked reductases, C-terminal domain"/>
    <property type="match status" value="1"/>
</dbReference>
<dbReference type="SUPFAM" id="SSF51905">
    <property type="entry name" value="FAD/NAD(P)-binding domain"/>
    <property type="match status" value="1"/>
</dbReference>
<organism>
    <name type="scientific">Cavia porcellus</name>
    <name type="common">Guinea pig</name>
    <dbReference type="NCBI Taxonomy" id="10141"/>
    <lineage>
        <taxon>Eukaryota</taxon>
        <taxon>Metazoa</taxon>
        <taxon>Chordata</taxon>
        <taxon>Craniata</taxon>
        <taxon>Vertebrata</taxon>
        <taxon>Euteleostomi</taxon>
        <taxon>Mammalia</taxon>
        <taxon>Eutheria</taxon>
        <taxon>Euarchontoglires</taxon>
        <taxon>Glires</taxon>
        <taxon>Rodentia</taxon>
        <taxon>Hystricomorpha</taxon>
        <taxon>Caviidae</taxon>
        <taxon>Cavia</taxon>
    </lineage>
</organism>
<accession>P58028</accession>
<keyword id="KW-0007">Acetylation</keyword>
<keyword id="KW-0274">FAD</keyword>
<keyword id="KW-0285">Flavoprotein</keyword>
<keyword id="KW-0472">Membrane</keyword>
<keyword id="KW-0496">Mitochondrion</keyword>
<keyword id="KW-1000">Mitochondrion outer membrane</keyword>
<keyword id="KW-0560">Oxidoreductase</keyword>
<keyword id="KW-1185">Reference proteome</keyword>
<keyword id="KW-0812">Transmembrane</keyword>
<keyword id="KW-1133">Transmembrane helix</keyword>
<sequence>MNSKCDVVVVGGGISGLAAAKLLHDSGLNVVVLEARDCVGGRTYTLRNQNVKYVDLGGAYVGPTQNRILRLAKELGLETYRVNDVERQIHHVKGKSYPFRGPFPPAWNPISYLDHNNLWRTMDDMGKEIPSDAPWKAPLAEEWDHMTMKELLNKICWTNCPRQFGTLFVNLCFTAETHEVSALWFLWYVKQCGGTTRIISTTNGGQERKFVGGSGQISERIMNLLGDRVKLQRPVVYIDQTGESVLVETLNHEIYEAKYVISAIPPALGMKIHFKPPLPMMKNQLVSRVPLGSVIKCIVYYKDPFWRKKDFCGTMVIEGEEAPVLYTMDDTKPDGSYAAIIGFIAAHKARKLARLTKEERLKKLCELYAKVLGSKEALKPVHYEEKNWCEEQYSGGCYTAYFPPGIMTQYGRFLRQPVGRIFFAGTETATHWSGYMEGAVEAGERAAREVLNAIGKIPEDEIWQPEPESVDVPAQPITTTFLERHLPSVPGLLRLIRLTTVVSAVALGFLAQKRGLLLRI</sequence>
<feature type="chain" id="PRO_0000099858" description="Amine oxidase [flavin-containing] B">
    <location>
        <begin position="1"/>
        <end position="520"/>
    </location>
</feature>
<feature type="topological domain" description="Cytoplasmic" evidence="1">
    <location>
        <begin position="1"/>
        <end position="489"/>
    </location>
</feature>
<feature type="transmembrane region" description="Helical; Anchor for type IV membrane protein" evidence="1">
    <location>
        <begin position="490"/>
        <end position="516"/>
    </location>
</feature>
<feature type="topological domain" description="Mitochondrial intermembrane" evidence="1">
    <location>
        <begin position="517"/>
        <end position="520"/>
    </location>
</feature>
<feature type="site" description="Important for catalytic activity" evidence="1">
    <location>
        <position position="156"/>
    </location>
</feature>
<feature type="site" description="Important for catalytic activity" evidence="1">
    <location>
        <position position="365"/>
    </location>
</feature>
<feature type="site" description="Important for catalytic activity" evidence="1">
    <location>
        <position position="382"/>
    </location>
</feature>
<feature type="modified residue" description="N6-acetyllysine" evidence="4">
    <location>
        <position position="52"/>
    </location>
</feature>
<feature type="modified residue" description="S-8alpha-FAD cysteine" evidence="3">
    <location>
        <position position="397"/>
    </location>
</feature>
<name>AOFB_CAVPO</name>
<gene>
    <name evidence="3" type="primary">MAOB</name>
</gene>
<proteinExistence type="evidence at transcript level"/>
<protein>
    <recommendedName>
        <fullName evidence="3">Amine oxidase [flavin-containing] B</fullName>
        <ecNumber evidence="3">1.4.3.21</ecNumber>
        <ecNumber evidence="3">1.4.3.4</ecNumber>
    </recommendedName>
    <alternativeName>
        <fullName>Monoamine oxidase type B</fullName>
        <shortName>MAO-B</shortName>
    </alternativeName>
</protein>